<evidence type="ECO:0000255" key="1">
    <source>
        <dbReference type="HAMAP-Rule" id="MF_00636"/>
    </source>
</evidence>
<sequence length="288" mass="32825">MQVIIISGLSGSGKSIALKALEDSGYYCVDNLPASLLVILINHLQTQHHSHVAVAIDMRSGDSITVLPWQFKMIDKSIRTEFIFLDTRTDTLIQRFSETRRRHPLSDKNITLEEAIQHEREVLATVSDLGHHIDTSSLRPNALRAFIRDFISDSRDPSQLTLMFQSFGYKHGIPLDADLVFDIRCLPNPFYDPHLKELTGHDLEVIRFMEAQPNAAKMLGDIGSFLDTWLPVYMQDNRAYLTVAIGCTGGQHRSVYFAEKLALHFRDAARVLVRHRGLAEYNQYYARR</sequence>
<keyword id="KW-0067">ATP-binding</keyword>
<keyword id="KW-0342">GTP-binding</keyword>
<keyword id="KW-0547">Nucleotide-binding</keyword>
<comment type="function">
    <text evidence="1">Displays ATPase and GTPase activities.</text>
</comment>
<comment type="similarity">
    <text evidence="1">Belongs to the RapZ-like family.</text>
</comment>
<organism>
    <name type="scientific">Nitrosomonas eutropha (strain DSM 101675 / C91 / Nm57)</name>
    <dbReference type="NCBI Taxonomy" id="335283"/>
    <lineage>
        <taxon>Bacteria</taxon>
        <taxon>Pseudomonadati</taxon>
        <taxon>Pseudomonadota</taxon>
        <taxon>Betaproteobacteria</taxon>
        <taxon>Nitrosomonadales</taxon>
        <taxon>Nitrosomonadaceae</taxon>
        <taxon>Nitrosomonas</taxon>
    </lineage>
</organism>
<reference key="1">
    <citation type="journal article" date="2007" name="Environ. Microbiol.">
        <title>Whole-genome analysis of the ammonia-oxidizing bacterium, Nitrosomonas eutropha C91: implications for niche adaptation.</title>
        <authorList>
            <person name="Stein L.Y."/>
            <person name="Arp D.J."/>
            <person name="Berube P.M."/>
            <person name="Chain P.S."/>
            <person name="Hauser L."/>
            <person name="Jetten M.S."/>
            <person name="Klotz M.G."/>
            <person name="Larimer F.W."/>
            <person name="Norton J.M."/>
            <person name="Op den Camp H.J.M."/>
            <person name="Shin M."/>
            <person name="Wei X."/>
        </authorList>
    </citation>
    <scope>NUCLEOTIDE SEQUENCE [LARGE SCALE GENOMIC DNA]</scope>
    <source>
        <strain>DSM 101675 / C91 / Nm57</strain>
    </source>
</reference>
<protein>
    <recommendedName>
        <fullName evidence="1">Nucleotide-binding protein Neut_1559</fullName>
    </recommendedName>
</protein>
<dbReference type="EMBL" id="CP000450">
    <property type="protein sequence ID" value="ABI59803.1"/>
    <property type="molecule type" value="Genomic_DNA"/>
</dbReference>
<dbReference type="RefSeq" id="WP_011634609.1">
    <property type="nucleotide sequence ID" value="NC_008344.1"/>
</dbReference>
<dbReference type="SMR" id="Q0AFS9"/>
<dbReference type="STRING" id="335283.Neut_1559"/>
<dbReference type="KEGG" id="net:Neut_1559"/>
<dbReference type="eggNOG" id="COG1660">
    <property type="taxonomic scope" value="Bacteria"/>
</dbReference>
<dbReference type="HOGENOM" id="CLU_059558_1_1_4"/>
<dbReference type="OrthoDB" id="9784461at2"/>
<dbReference type="Proteomes" id="UP000001966">
    <property type="component" value="Chromosome"/>
</dbReference>
<dbReference type="GO" id="GO:0005524">
    <property type="term" value="F:ATP binding"/>
    <property type="evidence" value="ECO:0007669"/>
    <property type="project" value="UniProtKB-UniRule"/>
</dbReference>
<dbReference type="GO" id="GO:0005525">
    <property type="term" value="F:GTP binding"/>
    <property type="evidence" value="ECO:0007669"/>
    <property type="project" value="UniProtKB-UniRule"/>
</dbReference>
<dbReference type="HAMAP" id="MF_00636">
    <property type="entry name" value="RapZ_like"/>
    <property type="match status" value="1"/>
</dbReference>
<dbReference type="InterPro" id="IPR027417">
    <property type="entry name" value="P-loop_NTPase"/>
</dbReference>
<dbReference type="InterPro" id="IPR005337">
    <property type="entry name" value="RapZ-like"/>
</dbReference>
<dbReference type="InterPro" id="IPR053930">
    <property type="entry name" value="RapZ-like_N"/>
</dbReference>
<dbReference type="InterPro" id="IPR053931">
    <property type="entry name" value="RapZ_C"/>
</dbReference>
<dbReference type="NCBIfam" id="NF003828">
    <property type="entry name" value="PRK05416.1"/>
    <property type="match status" value="1"/>
</dbReference>
<dbReference type="PANTHER" id="PTHR30448">
    <property type="entry name" value="RNASE ADAPTER PROTEIN RAPZ"/>
    <property type="match status" value="1"/>
</dbReference>
<dbReference type="PANTHER" id="PTHR30448:SF0">
    <property type="entry name" value="RNASE ADAPTER PROTEIN RAPZ"/>
    <property type="match status" value="1"/>
</dbReference>
<dbReference type="Pfam" id="PF22740">
    <property type="entry name" value="PapZ_C"/>
    <property type="match status" value="1"/>
</dbReference>
<dbReference type="Pfam" id="PF03668">
    <property type="entry name" value="RapZ-like_N"/>
    <property type="match status" value="1"/>
</dbReference>
<dbReference type="PIRSF" id="PIRSF005052">
    <property type="entry name" value="P-loopkin"/>
    <property type="match status" value="1"/>
</dbReference>
<dbReference type="SUPFAM" id="SSF52540">
    <property type="entry name" value="P-loop containing nucleoside triphosphate hydrolases"/>
    <property type="match status" value="1"/>
</dbReference>
<accession>Q0AFS9</accession>
<feature type="chain" id="PRO_1000056839" description="Nucleotide-binding protein Neut_1559">
    <location>
        <begin position="1"/>
        <end position="288"/>
    </location>
</feature>
<feature type="binding site" evidence="1">
    <location>
        <begin position="8"/>
        <end position="15"/>
    </location>
    <ligand>
        <name>ATP</name>
        <dbReference type="ChEBI" id="CHEBI:30616"/>
    </ligand>
</feature>
<feature type="binding site" evidence="1">
    <location>
        <begin position="57"/>
        <end position="60"/>
    </location>
    <ligand>
        <name>GTP</name>
        <dbReference type="ChEBI" id="CHEBI:37565"/>
    </ligand>
</feature>
<proteinExistence type="inferred from homology"/>
<gene>
    <name type="ordered locus">Neut_1559</name>
</gene>
<name>Y1559_NITEC</name>